<name>LSP1B_DROME</name>
<organism>
    <name type="scientific">Drosophila melanogaster</name>
    <name type="common">Fruit fly</name>
    <dbReference type="NCBI Taxonomy" id="7227"/>
    <lineage>
        <taxon>Eukaryota</taxon>
        <taxon>Metazoa</taxon>
        <taxon>Ecdysozoa</taxon>
        <taxon>Arthropoda</taxon>
        <taxon>Hexapoda</taxon>
        <taxon>Insecta</taxon>
        <taxon>Pterygota</taxon>
        <taxon>Neoptera</taxon>
        <taxon>Endopterygota</taxon>
        <taxon>Diptera</taxon>
        <taxon>Brachycera</taxon>
        <taxon>Muscomorpha</taxon>
        <taxon>Ephydroidea</taxon>
        <taxon>Drosophilidae</taxon>
        <taxon>Drosophila</taxon>
        <taxon>Sophophora</taxon>
    </lineage>
</organism>
<sequence length="789" mass="95914">MKIAIALLACLGLAAAASFHQTHEVKIADKAFLMKQKFLFEIVYRVEDPLMFEDHIKQGEKFYFEESYYTHYDMYMKKFFEAYKAHALLPKGEFFGALVMSHAKQARGLFNFFYYAKDWETFAANVAWARMHVNEGMFVYALTMAVIHRNDFHGLMLPSIYEIFPQFFFNSKFVFEAEKFDYEMWMKMTMYEKEYMDVYYKTNGYDYSTMYRSSDYTYMKDFKTWQWWKLMGLGEHWYTEDKFILRENIYEFNQETKWLSMMKDVKKFYMPVDYTRDLNLYNKESKLSYFTEDLGWNAYWYYLNMDYSFFLDGNTFDLKNDRRGEWWLYNVHQLLSRYYMERLSHGFGEIPEFSWYQQIEMGYDPQLIYYNGIGYSFRKNYYEMETYANYDMLDKITGFLKRIHNIVEMGYYKTADGHTIDLRKPEAIEFIGNMLQGNVDAMDKMFYQFWYMLAHMYFADADYYQMDVYPNVMLNFETMMRDPMYYMFYKSIAQVYFQFMHYLPKYTKEQLLMPGVTMKNVEVSDLTTYFDLVDFDVTNMLNDKMIFQDGKFVWDMSLFARQMRLNHKPFTYTYTIESEKVEKVVIRAFLGPKFDEFGKVISLAENRMNFMEIDEFYYELKAGTNKITRKSSEFYWTVKDRTTYTELYYYTMMAFDGKYDFPLDISEPHCGFPDRLVLPMGWQKGMPMQMFFMVVPYVAPAHEQFSTFDYTYSCGIGSGARYVDSLPFGYPFDRAIDEYEFFVPNMYFKDVSIYHADTMEPYYKYKSYSNYGHFDYTFFNDYYTKYFKF</sequence>
<evidence type="ECO:0000250" key="1"/>
<evidence type="ECO:0000255" key="2"/>
<evidence type="ECO:0000305" key="3"/>
<dbReference type="EMBL" id="U63556">
    <property type="protein sequence ID" value="AAB58821.1"/>
    <property type="molecule type" value="Genomic_DNA"/>
</dbReference>
<dbReference type="EMBL" id="AE014134">
    <property type="protein sequence ID" value="AAF51434.1"/>
    <property type="molecule type" value="Genomic_DNA"/>
</dbReference>
<dbReference type="EMBL" id="AY069163">
    <property type="protein sequence ID" value="AAL39308.1"/>
    <property type="molecule type" value="mRNA"/>
</dbReference>
<dbReference type="EMBL" id="BT024223">
    <property type="protein sequence ID" value="ABC86285.1"/>
    <property type="molecule type" value="mRNA"/>
</dbReference>
<dbReference type="EMBL" id="X03873">
    <property type="protein sequence ID" value="CAA27507.1"/>
    <property type="molecule type" value="Genomic_DNA"/>
</dbReference>
<dbReference type="PIR" id="B27144">
    <property type="entry name" value="B27144"/>
</dbReference>
<dbReference type="RefSeq" id="NP_001285556.1">
    <property type="nucleotide sequence ID" value="NM_001298627.1"/>
</dbReference>
<dbReference type="RefSeq" id="NP_476624.1">
    <property type="nucleotide sequence ID" value="NM_057276.4"/>
</dbReference>
<dbReference type="SMR" id="P11996"/>
<dbReference type="BioGRID" id="59528">
    <property type="interactions" value="2"/>
</dbReference>
<dbReference type="ComplexPortal" id="CPX-2224">
    <property type="entry name" value="Larval serum protein complex"/>
</dbReference>
<dbReference type="FunCoup" id="P11996">
    <property type="interactions" value="3"/>
</dbReference>
<dbReference type="IntAct" id="P11996">
    <property type="interactions" value="1"/>
</dbReference>
<dbReference type="STRING" id="7227.FBpp0311765"/>
<dbReference type="PaxDb" id="7227-FBpp0077690"/>
<dbReference type="DNASU" id="33274"/>
<dbReference type="EnsemblMetazoa" id="FBtr0078025">
    <property type="protein sequence ID" value="FBpp0077690"/>
    <property type="gene ID" value="FBgn0002563"/>
</dbReference>
<dbReference type="EnsemblMetazoa" id="FBtr0345738">
    <property type="protein sequence ID" value="FBpp0311765"/>
    <property type="gene ID" value="FBgn0002563"/>
</dbReference>
<dbReference type="GeneID" id="33274"/>
<dbReference type="KEGG" id="dme:Dmel_CG4178"/>
<dbReference type="AGR" id="FB:FBgn0002563"/>
<dbReference type="CTD" id="33274"/>
<dbReference type="FlyBase" id="FBgn0002563">
    <property type="gene designation" value="Lsp1beta"/>
</dbReference>
<dbReference type="VEuPathDB" id="VectorBase:FBgn0002563"/>
<dbReference type="eggNOG" id="ENOG502QR98">
    <property type="taxonomic scope" value="Eukaryota"/>
</dbReference>
<dbReference type="HOGENOM" id="CLU_012213_1_0_1"/>
<dbReference type="InParanoid" id="P11996"/>
<dbReference type="OMA" id="SMDKMFY"/>
<dbReference type="OrthoDB" id="6371642at2759"/>
<dbReference type="PhylomeDB" id="P11996"/>
<dbReference type="BioGRID-ORCS" id="33274">
    <property type="hits" value="0 hits in 1 CRISPR screen"/>
</dbReference>
<dbReference type="ChiTaRS" id="Lsp1beta">
    <property type="organism name" value="fly"/>
</dbReference>
<dbReference type="GenomeRNAi" id="33274"/>
<dbReference type="PRO" id="PR:P11996"/>
<dbReference type="Proteomes" id="UP000000803">
    <property type="component" value="Chromosome 2L"/>
</dbReference>
<dbReference type="Bgee" id="FBgn0002563">
    <property type="expression patterns" value="Expressed in embryonic/larval hemocyte (Drosophila) and 35 other cell types or tissues"/>
</dbReference>
<dbReference type="ExpressionAtlas" id="P11996">
    <property type="expression patterns" value="baseline and differential"/>
</dbReference>
<dbReference type="GO" id="GO:0005615">
    <property type="term" value="C:extracellular space"/>
    <property type="evidence" value="ECO:0000314"/>
    <property type="project" value="FlyBase"/>
</dbReference>
<dbReference type="GO" id="GO:0005616">
    <property type="term" value="C:larval serum protein complex"/>
    <property type="evidence" value="ECO:0000314"/>
    <property type="project" value="FlyBase"/>
</dbReference>
<dbReference type="GO" id="GO:0045735">
    <property type="term" value="F:nutrient reservoir activity"/>
    <property type="evidence" value="ECO:0000315"/>
    <property type="project" value="FlyBase"/>
</dbReference>
<dbReference type="GO" id="GO:0097009">
    <property type="term" value="P:energy homeostasis"/>
    <property type="evidence" value="ECO:0000315"/>
    <property type="project" value="FlyBase"/>
</dbReference>
<dbReference type="FunFam" id="1.10.1280.10:FF:000006">
    <property type="entry name" value="Larval serum protein 1 gamma"/>
    <property type="match status" value="1"/>
</dbReference>
<dbReference type="FunFam" id="1.20.1370.10:FF:000003">
    <property type="entry name" value="Larval serum protein 1 gamma"/>
    <property type="match status" value="1"/>
</dbReference>
<dbReference type="FunFam" id="2.60.40.1520:FF:000002">
    <property type="entry name" value="Larval serum protein 2"/>
    <property type="match status" value="1"/>
</dbReference>
<dbReference type="Gene3D" id="1.10.1280.10">
    <property type="entry name" value="Di-copper center containing domain from catechol oxidase"/>
    <property type="match status" value="1"/>
</dbReference>
<dbReference type="Gene3D" id="2.60.40.1520">
    <property type="entry name" value="Hemocyanin, C-terminal domain"/>
    <property type="match status" value="1"/>
</dbReference>
<dbReference type="Gene3D" id="1.20.1370.10">
    <property type="entry name" value="Hemocyanin, N-terminal domain"/>
    <property type="match status" value="1"/>
</dbReference>
<dbReference type="InterPro" id="IPR008922">
    <property type="entry name" value="Di-copper_centre_dom_sf"/>
</dbReference>
<dbReference type="InterPro" id="IPR013788">
    <property type="entry name" value="Hemocyanin/hexamerin"/>
</dbReference>
<dbReference type="InterPro" id="IPR000896">
    <property type="entry name" value="Hemocyanin/hexamerin_mid_dom"/>
</dbReference>
<dbReference type="InterPro" id="IPR005203">
    <property type="entry name" value="Hemocyanin_C"/>
</dbReference>
<dbReference type="InterPro" id="IPR037020">
    <property type="entry name" value="Hemocyanin_C_sf"/>
</dbReference>
<dbReference type="InterPro" id="IPR005204">
    <property type="entry name" value="Hemocyanin_N"/>
</dbReference>
<dbReference type="InterPro" id="IPR036697">
    <property type="entry name" value="Hemocyanin_N_sf"/>
</dbReference>
<dbReference type="InterPro" id="IPR014756">
    <property type="entry name" value="Ig_E-set"/>
</dbReference>
<dbReference type="PANTHER" id="PTHR11511:SF5">
    <property type="entry name" value="FAT-BODY PROTEIN 1-RELATED"/>
    <property type="match status" value="1"/>
</dbReference>
<dbReference type="PANTHER" id="PTHR11511">
    <property type="entry name" value="LARVAL STORAGE PROTEIN/PHENOLOXIDASE"/>
    <property type="match status" value="1"/>
</dbReference>
<dbReference type="Pfam" id="PF03723">
    <property type="entry name" value="Hemocyanin_C"/>
    <property type="match status" value="1"/>
</dbReference>
<dbReference type="Pfam" id="PF00372">
    <property type="entry name" value="Hemocyanin_M"/>
    <property type="match status" value="1"/>
</dbReference>
<dbReference type="Pfam" id="PF03722">
    <property type="entry name" value="Hemocyanin_N"/>
    <property type="match status" value="1"/>
</dbReference>
<dbReference type="PRINTS" id="PR00187">
    <property type="entry name" value="HAEMOCYANIN"/>
</dbReference>
<dbReference type="SUPFAM" id="SSF48056">
    <property type="entry name" value="Di-copper centre-containing domain"/>
    <property type="match status" value="1"/>
</dbReference>
<dbReference type="SUPFAM" id="SSF81296">
    <property type="entry name" value="E set domains"/>
    <property type="match status" value="1"/>
</dbReference>
<dbReference type="SUPFAM" id="SSF48050">
    <property type="entry name" value="Hemocyanin, N-terminal domain"/>
    <property type="match status" value="1"/>
</dbReference>
<dbReference type="PROSITE" id="PS00210">
    <property type="entry name" value="HEMOCYANIN_2"/>
    <property type="match status" value="1"/>
</dbReference>
<gene>
    <name type="primary">Lsp1beta</name>
    <name type="synonym">Lsp1-b</name>
    <name type="ORF">CG4178</name>
</gene>
<feature type="signal peptide" evidence="2">
    <location>
        <begin position="1"/>
        <end position="16"/>
    </location>
</feature>
<feature type="chain" id="PRO_0000013334" description="Larval serum protein 1 beta chain">
    <location>
        <begin position="17"/>
        <end position="789"/>
    </location>
</feature>
<feature type="sequence conflict" description="In Ref. 1; AAB58821." evidence="3" ref="1">
    <original>T</original>
    <variation>N</variation>
    <location>
        <position position="275"/>
    </location>
</feature>
<feature type="sequence conflict" description="In Ref. 1; AAB58821." evidence="3" ref="1">
    <original>S</original>
    <variation>R</variation>
    <location>
        <position position="725"/>
    </location>
</feature>
<protein>
    <recommendedName>
        <fullName>Larval serum protein 1 beta chain</fullName>
    </recommendedName>
    <alternativeName>
        <fullName>Hexamerin-1-beta</fullName>
    </alternativeName>
</protein>
<accession>P11996</accession>
<accession>Q29R17</accession>
<accession>Q9VPV2</accession>
<keyword id="KW-1185">Reference proteome</keyword>
<keyword id="KW-0964">Secreted</keyword>
<keyword id="KW-0732">Signal</keyword>
<keyword id="KW-0758">Storage protein</keyword>
<proteinExistence type="evidence at transcript level"/>
<reference key="1">
    <citation type="journal article" date="1997" name="Eur. J. Biochem.">
        <title>The Drosophila Lsp-1 beta gene. A structural and phylogenetic analysis.</title>
        <authorList>
            <person name="Massey H.C. Jr."/>
            <person name="Kejzlarova-Lepesant J."/>
            <person name="Willis R.L."/>
            <person name="Castleberry A.B."/>
            <person name="Benes H."/>
        </authorList>
    </citation>
    <scope>NUCLEOTIDE SEQUENCE [GENOMIC DNA]</scope>
    <source>
        <strain>Canton-S</strain>
    </source>
</reference>
<reference key="2">
    <citation type="journal article" date="2000" name="Science">
        <title>The genome sequence of Drosophila melanogaster.</title>
        <authorList>
            <person name="Adams M.D."/>
            <person name="Celniker S.E."/>
            <person name="Holt R.A."/>
            <person name="Evans C.A."/>
            <person name="Gocayne J.D."/>
            <person name="Amanatides P.G."/>
            <person name="Scherer S.E."/>
            <person name="Li P.W."/>
            <person name="Hoskins R.A."/>
            <person name="Galle R.F."/>
            <person name="George R.A."/>
            <person name="Lewis S.E."/>
            <person name="Richards S."/>
            <person name="Ashburner M."/>
            <person name="Henderson S.N."/>
            <person name="Sutton G.G."/>
            <person name="Wortman J.R."/>
            <person name="Yandell M.D."/>
            <person name="Zhang Q."/>
            <person name="Chen L.X."/>
            <person name="Brandon R.C."/>
            <person name="Rogers Y.-H.C."/>
            <person name="Blazej R.G."/>
            <person name="Champe M."/>
            <person name="Pfeiffer B.D."/>
            <person name="Wan K.H."/>
            <person name="Doyle C."/>
            <person name="Baxter E.G."/>
            <person name="Helt G."/>
            <person name="Nelson C.R."/>
            <person name="Miklos G.L.G."/>
            <person name="Abril J.F."/>
            <person name="Agbayani A."/>
            <person name="An H.-J."/>
            <person name="Andrews-Pfannkoch C."/>
            <person name="Baldwin D."/>
            <person name="Ballew R.M."/>
            <person name="Basu A."/>
            <person name="Baxendale J."/>
            <person name="Bayraktaroglu L."/>
            <person name="Beasley E.M."/>
            <person name="Beeson K.Y."/>
            <person name="Benos P.V."/>
            <person name="Berman B.P."/>
            <person name="Bhandari D."/>
            <person name="Bolshakov S."/>
            <person name="Borkova D."/>
            <person name="Botchan M.R."/>
            <person name="Bouck J."/>
            <person name="Brokstein P."/>
            <person name="Brottier P."/>
            <person name="Burtis K.C."/>
            <person name="Busam D.A."/>
            <person name="Butler H."/>
            <person name="Cadieu E."/>
            <person name="Center A."/>
            <person name="Chandra I."/>
            <person name="Cherry J.M."/>
            <person name="Cawley S."/>
            <person name="Dahlke C."/>
            <person name="Davenport L.B."/>
            <person name="Davies P."/>
            <person name="de Pablos B."/>
            <person name="Delcher A."/>
            <person name="Deng Z."/>
            <person name="Mays A.D."/>
            <person name="Dew I."/>
            <person name="Dietz S.M."/>
            <person name="Dodson K."/>
            <person name="Doup L.E."/>
            <person name="Downes M."/>
            <person name="Dugan-Rocha S."/>
            <person name="Dunkov B.C."/>
            <person name="Dunn P."/>
            <person name="Durbin K.J."/>
            <person name="Evangelista C.C."/>
            <person name="Ferraz C."/>
            <person name="Ferriera S."/>
            <person name="Fleischmann W."/>
            <person name="Fosler C."/>
            <person name="Gabrielian A.E."/>
            <person name="Garg N.S."/>
            <person name="Gelbart W.M."/>
            <person name="Glasser K."/>
            <person name="Glodek A."/>
            <person name="Gong F."/>
            <person name="Gorrell J.H."/>
            <person name="Gu Z."/>
            <person name="Guan P."/>
            <person name="Harris M."/>
            <person name="Harris N.L."/>
            <person name="Harvey D.A."/>
            <person name="Heiman T.J."/>
            <person name="Hernandez J.R."/>
            <person name="Houck J."/>
            <person name="Hostin D."/>
            <person name="Houston K.A."/>
            <person name="Howland T.J."/>
            <person name="Wei M.-H."/>
            <person name="Ibegwam C."/>
            <person name="Jalali M."/>
            <person name="Kalush F."/>
            <person name="Karpen G.H."/>
            <person name="Ke Z."/>
            <person name="Kennison J.A."/>
            <person name="Ketchum K.A."/>
            <person name="Kimmel B.E."/>
            <person name="Kodira C.D."/>
            <person name="Kraft C.L."/>
            <person name="Kravitz S."/>
            <person name="Kulp D."/>
            <person name="Lai Z."/>
            <person name="Lasko P."/>
            <person name="Lei Y."/>
            <person name="Levitsky A.A."/>
            <person name="Li J.H."/>
            <person name="Li Z."/>
            <person name="Liang Y."/>
            <person name="Lin X."/>
            <person name="Liu X."/>
            <person name="Mattei B."/>
            <person name="McIntosh T.C."/>
            <person name="McLeod M.P."/>
            <person name="McPherson D."/>
            <person name="Merkulov G."/>
            <person name="Milshina N.V."/>
            <person name="Mobarry C."/>
            <person name="Morris J."/>
            <person name="Moshrefi A."/>
            <person name="Mount S.M."/>
            <person name="Moy M."/>
            <person name="Murphy B."/>
            <person name="Murphy L."/>
            <person name="Muzny D.M."/>
            <person name="Nelson D.L."/>
            <person name="Nelson D.R."/>
            <person name="Nelson K.A."/>
            <person name="Nixon K."/>
            <person name="Nusskern D.R."/>
            <person name="Pacleb J.M."/>
            <person name="Palazzolo M."/>
            <person name="Pittman G.S."/>
            <person name="Pan S."/>
            <person name="Pollard J."/>
            <person name="Puri V."/>
            <person name="Reese M.G."/>
            <person name="Reinert K."/>
            <person name="Remington K."/>
            <person name="Saunders R.D.C."/>
            <person name="Scheeler F."/>
            <person name="Shen H."/>
            <person name="Shue B.C."/>
            <person name="Siden-Kiamos I."/>
            <person name="Simpson M."/>
            <person name="Skupski M.P."/>
            <person name="Smith T.J."/>
            <person name="Spier E."/>
            <person name="Spradling A.C."/>
            <person name="Stapleton M."/>
            <person name="Strong R."/>
            <person name="Sun E."/>
            <person name="Svirskas R."/>
            <person name="Tector C."/>
            <person name="Turner R."/>
            <person name="Venter E."/>
            <person name="Wang A.H."/>
            <person name="Wang X."/>
            <person name="Wang Z.-Y."/>
            <person name="Wassarman D.A."/>
            <person name="Weinstock G.M."/>
            <person name="Weissenbach J."/>
            <person name="Williams S.M."/>
            <person name="Woodage T."/>
            <person name="Worley K.C."/>
            <person name="Wu D."/>
            <person name="Yang S."/>
            <person name="Yao Q.A."/>
            <person name="Ye J."/>
            <person name="Yeh R.-F."/>
            <person name="Zaveri J.S."/>
            <person name="Zhan M."/>
            <person name="Zhang G."/>
            <person name="Zhao Q."/>
            <person name="Zheng L."/>
            <person name="Zheng X.H."/>
            <person name="Zhong F.N."/>
            <person name="Zhong W."/>
            <person name="Zhou X."/>
            <person name="Zhu S.C."/>
            <person name="Zhu X."/>
            <person name="Smith H.O."/>
            <person name="Gibbs R.A."/>
            <person name="Myers E.W."/>
            <person name="Rubin G.M."/>
            <person name="Venter J.C."/>
        </authorList>
    </citation>
    <scope>NUCLEOTIDE SEQUENCE [LARGE SCALE GENOMIC DNA]</scope>
    <source>
        <strain>Berkeley</strain>
    </source>
</reference>
<reference key="3">
    <citation type="journal article" date="2002" name="Genome Biol.">
        <title>Annotation of the Drosophila melanogaster euchromatic genome: a systematic review.</title>
        <authorList>
            <person name="Misra S."/>
            <person name="Crosby M.A."/>
            <person name="Mungall C.J."/>
            <person name="Matthews B.B."/>
            <person name="Campbell K.S."/>
            <person name="Hradecky P."/>
            <person name="Huang Y."/>
            <person name="Kaminker J.S."/>
            <person name="Millburn G.H."/>
            <person name="Prochnik S.E."/>
            <person name="Smith C.D."/>
            <person name="Tupy J.L."/>
            <person name="Whitfield E.J."/>
            <person name="Bayraktaroglu L."/>
            <person name="Berman B.P."/>
            <person name="Bettencourt B.R."/>
            <person name="Celniker S.E."/>
            <person name="de Grey A.D.N.J."/>
            <person name="Drysdale R.A."/>
            <person name="Harris N.L."/>
            <person name="Richter J."/>
            <person name="Russo S."/>
            <person name="Schroeder A.J."/>
            <person name="Shu S.Q."/>
            <person name="Stapleton M."/>
            <person name="Yamada C."/>
            <person name="Ashburner M."/>
            <person name="Gelbart W.M."/>
            <person name="Rubin G.M."/>
            <person name="Lewis S.E."/>
        </authorList>
    </citation>
    <scope>GENOME REANNOTATION</scope>
    <source>
        <strain>Berkeley</strain>
    </source>
</reference>
<reference key="4">
    <citation type="journal article" date="2002" name="Genome Biol.">
        <title>A Drosophila full-length cDNA resource.</title>
        <authorList>
            <person name="Stapleton M."/>
            <person name="Carlson J.W."/>
            <person name="Brokstein P."/>
            <person name="Yu C."/>
            <person name="Champe M."/>
            <person name="George R.A."/>
            <person name="Guarin H."/>
            <person name="Kronmiller B."/>
            <person name="Pacleb J.M."/>
            <person name="Park S."/>
            <person name="Wan K.H."/>
            <person name="Rubin G.M."/>
            <person name="Celniker S.E."/>
        </authorList>
    </citation>
    <scope>NUCLEOTIDE SEQUENCE [LARGE SCALE MRNA]</scope>
    <source>
        <strain>Berkeley</strain>
        <tissue>Head</tissue>
    </source>
</reference>
<reference key="5">
    <citation type="submission" date="2006-01" db="EMBL/GenBank/DDBJ databases">
        <authorList>
            <person name="Stapleton M."/>
            <person name="Carlson J.W."/>
            <person name="Chavez C."/>
            <person name="Frise E."/>
            <person name="George R.A."/>
            <person name="Pacleb J.M."/>
            <person name="Park S."/>
            <person name="Wan K.H."/>
            <person name="Yu C."/>
            <person name="Celniker S.E."/>
        </authorList>
    </citation>
    <scope>NUCLEOTIDE SEQUENCE [LARGE SCALE MRNA]</scope>
    <source>
        <strain>Berkeley</strain>
        <tissue>Larva</tissue>
        <tissue>Pupae</tissue>
    </source>
</reference>
<reference key="6">
    <citation type="journal article" date="1986" name="J. Mol. Biol.">
        <title>Sequence conservation around the 5' ends of the larval serum protein 1 genes of Drosophila melanogaster.</title>
        <authorList>
            <person name="Delaney S.J."/>
            <person name="Smith D.F."/>
            <person name="McClelland A."/>
            <person name="Sunkel C."/>
            <person name="Glover D.M."/>
        </authorList>
    </citation>
    <scope>NUCLEOTIDE SEQUENCE [GENOMIC DNA] OF 1-100</scope>
</reference>
<comment type="function">
    <text evidence="1">Larval storage protein (LSP) which may serve as a store of amino acids for synthesis of adult proteins.</text>
</comment>
<comment type="subunit">
    <text>Heterohexamer, composed of three subunits, alpha, beta and gamma.</text>
</comment>
<comment type="subcellular location">
    <subcellularLocation>
        <location>Secreted</location>
        <location>Extracellular space</location>
    </subcellularLocation>
</comment>
<comment type="tissue specificity">
    <text>Larval hemolymph.</text>
</comment>
<comment type="similarity">
    <text evidence="3">Belongs to the hemocyanin family.</text>
</comment>